<feature type="chain" id="PRO_0000077445" description="Carbonic anhydrase">
    <location>
        <begin position="1"/>
        <end position="589"/>
    </location>
</feature>
<feature type="domain" description="Alpha-carbonic anhydrase 1" evidence="2">
    <location>
        <begin position="59"/>
        <end position="316"/>
    </location>
</feature>
<feature type="domain" description="Alpha-carbonic anhydrase 2" evidence="2">
    <location>
        <begin position="321"/>
        <end position="585"/>
    </location>
</feature>
<feature type="region of interest" description="Catalytic">
    <location>
        <begin position="390"/>
        <end position="589"/>
    </location>
</feature>
<feature type="binding site" evidence="1">
    <location>
        <begin position="258"/>
        <end position="259"/>
    </location>
    <ligand>
        <name>substrate</name>
    </ligand>
</feature>
<feature type="binding site" evidence="2">
    <location>
        <position position="420"/>
    </location>
    <ligand>
        <name>Zn(2+)</name>
        <dbReference type="ChEBI" id="CHEBI:29105"/>
        <note>catalytic</note>
    </ligand>
</feature>
<feature type="binding site" evidence="2">
    <location>
        <position position="422"/>
    </location>
    <ligand>
        <name>Zn(2+)</name>
        <dbReference type="ChEBI" id="CHEBI:29105"/>
        <note>catalytic</note>
    </ligand>
</feature>
<feature type="binding site" evidence="2">
    <location>
        <position position="440"/>
    </location>
    <ligand>
        <name>Zn(2+)</name>
        <dbReference type="ChEBI" id="CHEBI:29105"/>
        <note>catalytic</note>
    </ligand>
</feature>
<organism>
    <name type="scientific">Dunaliella salina</name>
    <name type="common">Green alga</name>
    <name type="synonym">Protococcus salinus</name>
    <dbReference type="NCBI Taxonomy" id="3046"/>
    <lineage>
        <taxon>Eukaryota</taxon>
        <taxon>Viridiplantae</taxon>
        <taxon>Chlorophyta</taxon>
        <taxon>core chlorophytes</taxon>
        <taxon>Chlorophyceae</taxon>
        <taxon>CS clade</taxon>
        <taxon>Chlamydomonadales</taxon>
        <taxon>Dunaliellaceae</taxon>
        <taxon>Dunaliella</taxon>
    </lineage>
</organism>
<gene>
    <name type="primary">DCA</name>
</gene>
<keyword id="KW-0456">Lyase</keyword>
<keyword id="KW-0479">Metal-binding</keyword>
<keyword id="KW-0346">Stress response</keyword>
<keyword id="KW-0862">Zinc</keyword>
<evidence type="ECO:0000250" key="1"/>
<evidence type="ECO:0000255" key="2">
    <source>
        <dbReference type="PROSITE-ProRule" id="PRU01134"/>
    </source>
</evidence>
<evidence type="ECO:0000305" key="3"/>
<name>CAH_DUNSA</name>
<proteinExistence type="evidence at transcript level"/>
<protein>
    <recommendedName>
        <fullName>Carbonic anhydrase</fullName>
        <ecNumber>4.2.1.1</ecNumber>
    </recommendedName>
    <alternativeName>
        <fullName>Carbonate dehydratase</fullName>
    </alternativeName>
</protein>
<dbReference type="EC" id="4.2.1.1"/>
<dbReference type="EMBL" id="U53811">
    <property type="protein sequence ID" value="AAC49378.1"/>
    <property type="molecule type" value="mRNA"/>
</dbReference>
<dbReference type="PIR" id="T08466">
    <property type="entry name" value="T08466"/>
</dbReference>
<dbReference type="SMR" id="P54212"/>
<dbReference type="BRENDA" id="4.2.1.1">
    <property type="organism ID" value="2018"/>
</dbReference>
<dbReference type="GO" id="GO:0004089">
    <property type="term" value="F:carbonate dehydratase activity"/>
    <property type="evidence" value="ECO:0007669"/>
    <property type="project" value="UniProtKB-EC"/>
</dbReference>
<dbReference type="GO" id="GO:0008270">
    <property type="term" value="F:zinc ion binding"/>
    <property type="evidence" value="ECO:0007669"/>
    <property type="project" value="InterPro"/>
</dbReference>
<dbReference type="CDD" id="cd03124">
    <property type="entry name" value="alpha_CA_prokaryotic_like"/>
    <property type="match status" value="2"/>
</dbReference>
<dbReference type="Gene3D" id="3.10.200.10">
    <property type="entry name" value="Alpha carbonic anhydrase"/>
    <property type="match status" value="2"/>
</dbReference>
<dbReference type="InterPro" id="IPR041891">
    <property type="entry name" value="Alpha_CA_prokaryot-like"/>
</dbReference>
<dbReference type="InterPro" id="IPR001148">
    <property type="entry name" value="CA_dom"/>
</dbReference>
<dbReference type="InterPro" id="IPR036398">
    <property type="entry name" value="CA_dom_sf"/>
</dbReference>
<dbReference type="InterPro" id="IPR023561">
    <property type="entry name" value="Carbonic_anhydrase_a-class"/>
</dbReference>
<dbReference type="InterPro" id="IPR018338">
    <property type="entry name" value="Carbonic_anhydrase_a-class_CS"/>
</dbReference>
<dbReference type="PANTHER" id="PTHR18952">
    <property type="entry name" value="CARBONIC ANHYDRASE"/>
    <property type="match status" value="1"/>
</dbReference>
<dbReference type="PANTHER" id="PTHR18952:SF265">
    <property type="entry name" value="CARBONIC ANHYDRASE"/>
    <property type="match status" value="1"/>
</dbReference>
<dbReference type="Pfam" id="PF00194">
    <property type="entry name" value="Carb_anhydrase"/>
    <property type="match status" value="2"/>
</dbReference>
<dbReference type="SMART" id="SM01057">
    <property type="entry name" value="Carb_anhydrase"/>
    <property type="match status" value="2"/>
</dbReference>
<dbReference type="SUPFAM" id="SSF51069">
    <property type="entry name" value="Carbonic anhydrase"/>
    <property type="match status" value="2"/>
</dbReference>
<dbReference type="PROSITE" id="PS00162">
    <property type="entry name" value="ALPHA_CA_1"/>
    <property type="match status" value="2"/>
</dbReference>
<dbReference type="PROSITE" id="PS51144">
    <property type="entry name" value="ALPHA_CA_2"/>
    <property type="match status" value="2"/>
</dbReference>
<accession>P54212</accession>
<comment type="function">
    <text>Reversible hydration of carbon dioxide.</text>
</comment>
<comment type="catalytic activity">
    <reaction>
        <text>hydrogencarbonate + H(+) = CO2 + H2O</text>
        <dbReference type="Rhea" id="RHEA:10748"/>
        <dbReference type="ChEBI" id="CHEBI:15377"/>
        <dbReference type="ChEBI" id="CHEBI:15378"/>
        <dbReference type="ChEBI" id="CHEBI:16526"/>
        <dbReference type="ChEBI" id="CHEBI:17544"/>
        <dbReference type="EC" id="4.2.1.1"/>
    </reaction>
</comment>
<comment type="cofactor">
    <cofactor evidence="1">
        <name>Zn(2+)</name>
        <dbReference type="ChEBI" id="CHEBI:29105"/>
    </cofactor>
</comment>
<comment type="induction">
    <text>By salt stress.</text>
</comment>
<comment type="similarity">
    <text evidence="3">Belongs to the alpha-carbonic anhydrase family.</text>
</comment>
<sequence>MGSRRITLLGALFAVLAVAIEGRTLLTHNLKAEAAETVDAVSSVVAGSAGRQLLVSEPHDYNYEKVGFDWTGGVCVNTGTSKQSPINIETDSLAEESERLGTADDTSRLALKGLLSSSYQLTSEVAINLEQDMQFSFNAPDEDLPQLTIGGVVHTFKPVQIHFHHFASEHAIDGQLYPLEAHMVMASQNDGSDQLAVIGIMYKYGEEDPFLKRLQETAQSNGEAGDKNVELNSFSINVARDLLPESDLTYYGYDGSLTTPGCDERVKWHVFKEARTVSVAQLKVFSEVTLAAHPEATVTNNRVIQPLNGRKVYEYKGEPNDKYNYVQHGFDWRDNGLDSCAGDVQSPIDIVTSTLQAGSSRSDVSSVNLMTLNTDAFTLTGNTVNIGQGMQINFGDPPAGDLPVIRIGTRDVTFRPLQVHWHFFLSEHTVDGVHYPLEAHIVMKDNDNLGDSAGQLAVIGIMYKYGDADPFITDMQKRVSDKIASGAITYGQSGVSLNNPDDPFNVNIKNNFLPSELGYAGYDGSLTTPPCSEIVKWHVFLEPRTVSVEQMEVFADVTLNSNPGATVTTNRMIQPLEGRTVYGYNGAAA</sequence>
<reference key="1">
    <citation type="journal article" date="1996" name="J. Biol. Chem.">
        <title>A salt-resistant plasma membrane carbonic anhydrase is induced by salt in Dunaliella salina.</title>
        <authorList>
            <person name="Fisher M."/>
            <person name="Gokhman I."/>
            <person name="Pick U."/>
            <person name="Zamir A."/>
        </authorList>
    </citation>
    <scope>NUCLEOTIDE SEQUENCE [MRNA]</scope>
</reference>